<dbReference type="EMBL" id="AY191270">
    <property type="protein sequence ID" value="AAO91937.1"/>
    <property type="molecule type" value="mRNA"/>
</dbReference>
<dbReference type="EMBL" id="BC097266">
    <property type="protein sequence ID" value="AAH97266.1"/>
    <property type="molecule type" value="mRNA"/>
</dbReference>
<dbReference type="RefSeq" id="NP_937763.2">
    <property type="nucleotide sequence ID" value="NM_198130.2"/>
</dbReference>
<dbReference type="RefSeq" id="XP_006244149.1">
    <property type="nucleotide sequence ID" value="XM_006244087.3"/>
</dbReference>
<dbReference type="SMR" id="Q6Y1S1"/>
<dbReference type="FunCoup" id="Q6Y1S1">
    <property type="interactions" value="1806"/>
</dbReference>
<dbReference type="STRING" id="10116.ENSRNOP00000018341"/>
<dbReference type="PhosphoSitePlus" id="Q6Y1S1"/>
<dbReference type="PaxDb" id="10116-ENSRNOP00000018341"/>
<dbReference type="Ensembl" id="ENSRNOT00000018341.6">
    <property type="protein sequence ID" value="ENSRNOP00000018341.3"/>
    <property type="gene ID" value="ENSRNOG00000013634.6"/>
</dbReference>
<dbReference type="GeneID" id="301059"/>
<dbReference type="KEGG" id="rno:301059"/>
<dbReference type="UCSC" id="RGD:735043">
    <property type="organism name" value="rat"/>
</dbReference>
<dbReference type="AGR" id="RGD:735043"/>
<dbReference type="CTD" id="4615"/>
<dbReference type="RGD" id="735043">
    <property type="gene designation" value="Myd88"/>
</dbReference>
<dbReference type="eggNOG" id="ENOG502QWKI">
    <property type="taxonomic scope" value="Eukaryota"/>
</dbReference>
<dbReference type="GeneTree" id="ENSGT00510000048324"/>
<dbReference type="HOGENOM" id="CLU_045884_0_0_1"/>
<dbReference type="InParanoid" id="Q6Y1S1"/>
<dbReference type="OMA" id="SNECDFQ"/>
<dbReference type="PhylomeDB" id="Q6Y1S1"/>
<dbReference type="TreeFam" id="TF326264"/>
<dbReference type="Reactome" id="R-RNO-1257604">
    <property type="pathway name" value="PIP3 activates AKT signaling"/>
</dbReference>
<dbReference type="Reactome" id="R-RNO-1810476">
    <property type="pathway name" value="RIP-mediated NFkB activation via ZBP1"/>
</dbReference>
<dbReference type="Reactome" id="R-RNO-209543">
    <property type="pathway name" value="p75NTR recruits signalling complexes"/>
</dbReference>
<dbReference type="Reactome" id="R-RNO-3134963">
    <property type="pathway name" value="DEx/H-box helicases activate type I IFN and inflammatory cytokines production"/>
</dbReference>
<dbReference type="Reactome" id="R-RNO-6811558">
    <property type="pathway name" value="PI5P, PP2A and IER3 Regulate PI3K/AKT Signaling"/>
</dbReference>
<dbReference type="Reactome" id="R-RNO-9020702">
    <property type="pathway name" value="Interleukin-1 signaling"/>
</dbReference>
<dbReference type="PRO" id="PR:Q6Y1S1"/>
<dbReference type="Proteomes" id="UP000002494">
    <property type="component" value="Chromosome 8"/>
</dbReference>
<dbReference type="Bgee" id="ENSRNOG00000013634">
    <property type="expression patterns" value="Expressed in spleen and 19 other cell types or tissues"/>
</dbReference>
<dbReference type="GO" id="GO:0009986">
    <property type="term" value="C:cell surface"/>
    <property type="evidence" value="ECO:0000266"/>
    <property type="project" value="RGD"/>
</dbReference>
<dbReference type="GO" id="GO:0005737">
    <property type="term" value="C:cytoplasm"/>
    <property type="evidence" value="ECO:0000266"/>
    <property type="project" value="RGD"/>
</dbReference>
<dbReference type="GO" id="GO:0005829">
    <property type="term" value="C:cytosol"/>
    <property type="evidence" value="ECO:0000266"/>
    <property type="project" value="RGD"/>
</dbReference>
<dbReference type="GO" id="GO:0031234">
    <property type="term" value="C:extrinsic component of cytoplasmic side of plasma membrane"/>
    <property type="evidence" value="ECO:0000266"/>
    <property type="project" value="RGD"/>
</dbReference>
<dbReference type="GO" id="GO:0019897">
    <property type="term" value="C:extrinsic component of plasma membrane"/>
    <property type="evidence" value="ECO:0000266"/>
    <property type="project" value="RGD"/>
</dbReference>
<dbReference type="GO" id="GO:0005634">
    <property type="term" value="C:nucleus"/>
    <property type="evidence" value="ECO:0000266"/>
    <property type="project" value="RGD"/>
</dbReference>
<dbReference type="GO" id="GO:0005886">
    <property type="term" value="C:plasma membrane"/>
    <property type="evidence" value="ECO:0000266"/>
    <property type="project" value="RGD"/>
</dbReference>
<dbReference type="GO" id="GO:0032991">
    <property type="term" value="C:protein-containing complex"/>
    <property type="evidence" value="ECO:0000314"/>
    <property type="project" value="RGD"/>
</dbReference>
<dbReference type="GO" id="GO:0140674">
    <property type="term" value="F:ATP-dependent histone chaperone activity"/>
    <property type="evidence" value="ECO:0000266"/>
    <property type="project" value="RGD"/>
</dbReference>
<dbReference type="GO" id="GO:0042802">
    <property type="term" value="F:identical protein binding"/>
    <property type="evidence" value="ECO:0000266"/>
    <property type="project" value="RGD"/>
</dbReference>
<dbReference type="GO" id="GO:0005149">
    <property type="term" value="F:interleukin-1 receptor binding"/>
    <property type="evidence" value="ECO:0000353"/>
    <property type="project" value="RGD"/>
</dbReference>
<dbReference type="GO" id="GO:0060090">
    <property type="term" value="F:molecular adaptor activity"/>
    <property type="evidence" value="ECO:0000266"/>
    <property type="project" value="RGD"/>
</dbReference>
<dbReference type="GO" id="GO:0035591">
    <property type="term" value="F:signaling adaptor activity"/>
    <property type="evidence" value="ECO:0000266"/>
    <property type="project" value="RGD"/>
</dbReference>
<dbReference type="GO" id="GO:0005102">
    <property type="term" value="F:signaling receptor binding"/>
    <property type="evidence" value="ECO:0000353"/>
    <property type="project" value="RGD"/>
</dbReference>
<dbReference type="GO" id="GO:0070976">
    <property type="term" value="F:TIR domain binding"/>
    <property type="evidence" value="ECO:0000266"/>
    <property type="project" value="RGD"/>
</dbReference>
<dbReference type="GO" id="GO:0005121">
    <property type="term" value="F:Toll binding"/>
    <property type="evidence" value="ECO:0000314"/>
    <property type="project" value="RGD"/>
</dbReference>
<dbReference type="GO" id="GO:0035325">
    <property type="term" value="F:Toll-like receptor binding"/>
    <property type="evidence" value="ECO:0000266"/>
    <property type="project" value="RGD"/>
</dbReference>
<dbReference type="GO" id="GO:0070935">
    <property type="term" value="P:3'-UTR-mediated mRNA stabilization"/>
    <property type="evidence" value="ECO:0000266"/>
    <property type="project" value="RGD"/>
</dbReference>
<dbReference type="GO" id="GO:0006915">
    <property type="term" value="P:apoptotic process"/>
    <property type="evidence" value="ECO:0000266"/>
    <property type="project" value="RGD"/>
</dbReference>
<dbReference type="GO" id="GO:0007166">
    <property type="term" value="P:cell surface receptor signaling pathway"/>
    <property type="evidence" value="ECO:0000266"/>
    <property type="project" value="RGD"/>
</dbReference>
<dbReference type="GO" id="GO:0071260">
    <property type="term" value="P:cellular response to mechanical stimulus"/>
    <property type="evidence" value="ECO:0000266"/>
    <property type="project" value="RGD"/>
</dbReference>
<dbReference type="GO" id="GO:0140052">
    <property type="term" value="P:cellular response to oxidised low-density lipoprotein particle stimulus"/>
    <property type="evidence" value="ECO:0000266"/>
    <property type="project" value="RGD"/>
</dbReference>
<dbReference type="GO" id="GO:0006325">
    <property type="term" value="P:chromatin organization"/>
    <property type="evidence" value="ECO:0000266"/>
    <property type="project" value="RGD"/>
</dbReference>
<dbReference type="GO" id="GO:0019221">
    <property type="term" value="P:cytokine-mediated signaling pathway"/>
    <property type="evidence" value="ECO:0000315"/>
    <property type="project" value="RGD"/>
</dbReference>
<dbReference type="GO" id="GO:0042742">
    <property type="term" value="P:defense response to bacterium"/>
    <property type="evidence" value="ECO:0000266"/>
    <property type="project" value="RGD"/>
</dbReference>
<dbReference type="GO" id="GO:0050830">
    <property type="term" value="P:defense response to Gram-positive bacterium"/>
    <property type="evidence" value="ECO:0000250"/>
    <property type="project" value="UniProtKB"/>
</dbReference>
<dbReference type="GO" id="GO:0051607">
    <property type="term" value="P:defense response to virus"/>
    <property type="evidence" value="ECO:0000250"/>
    <property type="project" value="UniProtKB"/>
</dbReference>
<dbReference type="GO" id="GO:0090557">
    <property type="term" value="P:establishment of endothelial intestinal barrier"/>
    <property type="evidence" value="ECO:0000266"/>
    <property type="project" value="RGD"/>
</dbReference>
<dbReference type="GO" id="GO:0010467">
    <property type="term" value="P:gene expression"/>
    <property type="evidence" value="ECO:0000266"/>
    <property type="project" value="RGD"/>
</dbReference>
<dbReference type="GO" id="GO:0016064">
    <property type="term" value="P:immunoglobulin mediated immune response"/>
    <property type="evidence" value="ECO:0000266"/>
    <property type="project" value="RGD"/>
</dbReference>
<dbReference type="GO" id="GO:0009682">
    <property type="term" value="P:induced systemic resistance"/>
    <property type="evidence" value="ECO:0000266"/>
    <property type="project" value="RGD"/>
</dbReference>
<dbReference type="GO" id="GO:0006954">
    <property type="term" value="P:inflammatory response"/>
    <property type="evidence" value="ECO:0000266"/>
    <property type="project" value="RGD"/>
</dbReference>
<dbReference type="GO" id="GO:0045087">
    <property type="term" value="P:innate immune response"/>
    <property type="evidence" value="ECO:0000318"/>
    <property type="project" value="GO_Central"/>
</dbReference>
<dbReference type="GO" id="GO:0070498">
    <property type="term" value="P:interleukin-1-mediated signaling pathway"/>
    <property type="evidence" value="ECO:0000266"/>
    <property type="project" value="RGD"/>
</dbReference>
<dbReference type="GO" id="GO:0038172">
    <property type="term" value="P:interleukin-33-mediated signaling pathway"/>
    <property type="evidence" value="ECO:0000266"/>
    <property type="project" value="RGD"/>
</dbReference>
<dbReference type="GO" id="GO:0007254">
    <property type="term" value="P:JNK cascade"/>
    <property type="evidence" value="ECO:0000315"/>
    <property type="project" value="RGD"/>
</dbReference>
<dbReference type="GO" id="GO:0002269">
    <property type="term" value="P:leukocyte activation involved in inflammatory response"/>
    <property type="evidence" value="ECO:0000266"/>
    <property type="project" value="RGD"/>
</dbReference>
<dbReference type="GO" id="GO:0031663">
    <property type="term" value="P:lipopolysaccharide-mediated signaling pathway"/>
    <property type="evidence" value="ECO:0000266"/>
    <property type="project" value="RGD"/>
</dbReference>
<dbReference type="GO" id="GO:0014004">
    <property type="term" value="P:microglia differentiation"/>
    <property type="evidence" value="ECO:0000266"/>
    <property type="project" value="RGD"/>
</dbReference>
<dbReference type="GO" id="GO:0002755">
    <property type="term" value="P:MyD88-dependent toll-like receptor signaling pathway"/>
    <property type="evidence" value="ECO:0000266"/>
    <property type="project" value="RGD"/>
</dbReference>
<dbReference type="GO" id="GO:0022008">
    <property type="term" value="P:neurogenesis"/>
    <property type="evidence" value="ECO:0000266"/>
    <property type="project" value="RGD"/>
</dbReference>
<dbReference type="GO" id="GO:0002283">
    <property type="term" value="P:neutrophil activation involved in immune response"/>
    <property type="evidence" value="ECO:0000266"/>
    <property type="project" value="RGD"/>
</dbReference>
<dbReference type="GO" id="GO:0070944">
    <property type="term" value="P:neutrophil-mediated killing of bacterium"/>
    <property type="evidence" value="ECO:0000266"/>
    <property type="project" value="RGD"/>
</dbReference>
<dbReference type="GO" id="GO:0006909">
    <property type="term" value="P:phagocytosis"/>
    <property type="evidence" value="ECO:0000266"/>
    <property type="project" value="RGD"/>
</dbReference>
<dbReference type="GO" id="GO:0043123">
    <property type="term" value="P:positive regulation of canonical NF-kappaB signal transduction"/>
    <property type="evidence" value="ECO:0000266"/>
    <property type="project" value="RGD"/>
</dbReference>
<dbReference type="GO" id="GO:0032722">
    <property type="term" value="P:positive regulation of chemokine production"/>
    <property type="evidence" value="ECO:0000266"/>
    <property type="project" value="RGD"/>
</dbReference>
<dbReference type="GO" id="GO:1900017">
    <property type="term" value="P:positive regulation of cytokine production involved in inflammatory response"/>
    <property type="evidence" value="ECO:0000266"/>
    <property type="project" value="RGD"/>
</dbReference>
<dbReference type="GO" id="GO:0010628">
    <property type="term" value="P:positive regulation of gene expression"/>
    <property type="evidence" value="ECO:0000266"/>
    <property type="project" value="RGD"/>
</dbReference>
<dbReference type="GO" id="GO:0032731">
    <property type="term" value="P:positive regulation of interleukin-1 beta production"/>
    <property type="evidence" value="ECO:0000250"/>
    <property type="project" value="UniProtKB"/>
</dbReference>
<dbReference type="GO" id="GO:0032740">
    <property type="term" value="P:positive regulation of interleukin-17 production"/>
    <property type="evidence" value="ECO:0000266"/>
    <property type="project" value="RGD"/>
</dbReference>
<dbReference type="GO" id="GO:0032747">
    <property type="term" value="P:positive regulation of interleukin-23 production"/>
    <property type="evidence" value="ECO:0000266"/>
    <property type="project" value="RGD"/>
</dbReference>
<dbReference type="GO" id="GO:0032755">
    <property type="term" value="P:positive regulation of interleukin-6 production"/>
    <property type="evidence" value="ECO:0000266"/>
    <property type="project" value="RGD"/>
</dbReference>
<dbReference type="GO" id="GO:0032757">
    <property type="term" value="P:positive regulation of interleukin-8 production"/>
    <property type="evidence" value="ECO:0000266"/>
    <property type="project" value="RGD"/>
</dbReference>
<dbReference type="GO" id="GO:0046330">
    <property type="term" value="P:positive regulation of JNK cascade"/>
    <property type="evidence" value="ECO:0000266"/>
    <property type="project" value="RGD"/>
</dbReference>
<dbReference type="GO" id="GO:0050671">
    <property type="term" value="P:positive regulation of lymphocyte proliferation"/>
    <property type="evidence" value="ECO:0000266"/>
    <property type="project" value="RGD"/>
</dbReference>
<dbReference type="GO" id="GO:0060907">
    <property type="term" value="P:positive regulation of macrophage cytokine production"/>
    <property type="evidence" value="ECO:0000266"/>
    <property type="project" value="RGD"/>
</dbReference>
<dbReference type="GO" id="GO:1900227">
    <property type="term" value="P:positive regulation of NLRP3 inflammasome complex assembly"/>
    <property type="evidence" value="ECO:0000250"/>
    <property type="project" value="UniProtKB"/>
</dbReference>
<dbReference type="GO" id="GO:0048661">
    <property type="term" value="P:positive regulation of smooth muscle cell proliferation"/>
    <property type="evidence" value="ECO:0000315"/>
    <property type="project" value="RGD"/>
</dbReference>
<dbReference type="GO" id="GO:0045944">
    <property type="term" value="P:positive regulation of transcription by RNA polymerase II"/>
    <property type="evidence" value="ECO:0000266"/>
    <property type="project" value="RGD"/>
</dbReference>
<dbReference type="GO" id="GO:0032760">
    <property type="term" value="P:positive regulation of tumor necrosis factor production"/>
    <property type="evidence" value="ECO:0000266"/>
    <property type="project" value="RGD"/>
</dbReference>
<dbReference type="GO" id="GO:0032481">
    <property type="term" value="P:positive regulation of type I interferon production"/>
    <property type="evidence" value="ECO:0000266"/>
    <property type="project" value="RGD"/>
</dbReference>
<dbReference type="GO" id="GO:0042127">
    <property type="term" value="P:regulation of cell population proliferation"/>
    <property type="evidence" value="ECO:0000266"/>
    <property type="project" value="RGD"/>
</dbReference>
<dbReference type="GO" id="GO:2000338">
    <property type="term" value="P:regulation of chemokine (C-X-C motif) ligand 1 production"/>
    <property type="evidence" value="ECO:0000266"/>
    <property type="project" value="RGD"/>
</dbReference>
<dbReference type="GO" id="GO:2000341">
    <property type="term" value="P:regulation of chemokine (C-X-C motif) ligand 2 production"/>
    <property type="evidence" value="ECO:0000266"/>
    <property type="project" value="RGD"/>
</dbReference>
<dbReference type="GO" id="GO:0010468">
    <property type="term" value="P:regulation of gene expression"/>
    <property type="evidence" value="ECO:0000266"/>
    <property type="project" value="RGD"/>
</dbReference>
<dbReference type="GO" id="GO:0050727">
    <property type="term" value="P:regulation of inflammatory response"/>
    <property type="evidence" value="ECO:0000266"/>
    <property type="project" value="RGD"/>
</dbReference>
<dbReference type="GO" id="GO:0032675">
    <property type="term" value="P:regulation of interleukin-6 production"/>
    <property type="evidence" value="ECO:0000266"/>
    <property type="project" value="RGD"/>
</dbReference>
<dbReference type="GO" id="GO:1902622">
    <property type="term" value="P:regulation of neutrophil migration"/>
    <property type="evidence" value="ECO:0000266"/>
    <property type="project" value="RGD"/>
</dbReference>
<dbReference type="GO" id="GO:0032680">
    <property type="term" value="P:regulation of tumor necrosis factor production"/>
    <property type="evidence" value="ECO:0000266"/>
    <property type="project" value="RGD"/>
</dbReference>
<dbReference type="GO" id="GO:0014075">
    <property type="term" value="P:response to amine"/>
    <property type="evidence" value="ECO:0000270"/>
    <property type="project" value="RGD"/>
</dbReference>
<dbReference type="GO" id="GO:0043200">
    <property type="term" value="P:response to amino acid"/>
    <property type="evidence" value="ECO:0000270"/>
    <property type="project" value="RGD"/>
</dbReference>
<dbReference type="GO" id="GO:0045471">
    <property type="term" value="P:response to ethanol"/>
    <property type="evidence" value="ECO:0000270"/>
    <property type="project" value="RGD"/>
</dbReference>
<dbReference type="GO" id="GO:0070555">
    <property type="term" value="P:response to interleukin-1"/>
    <property type="evidence" value="ECO:0000266"/>
    <property type="project" value="RGD"/>
</dbReference>
<dbReference type="GO" id="GO:0032496">
    <property type="term" value="P:response to lipopolysaccharide"/>
    <property type="evidence" value="ECO:0000266"/>
    <property type="project" value="RGD"/>
</dbReference>
<dbReference type="GO" id="GO:0002238">
    <property type="term" value="P:response to molecule of fungal origin"/>
    <property type="evidence" value="ECO:0000266"/>
    <property type="project" value="RGD"/>
</dbReference>
<dbReference type="GO" id="GO:0032494">
    <property type="term" value="P:response to peptidoglycan"/>
    <property type="evidence" value="ECO:0000266"/>
    <property type="project" value="RGD"/>
</dbReference>
<dbReference type="GO" id="GO:0009615">
    <property type="term" value="P:response to virus"/>
    <property type="evidence" value="ECO:0000266"/>
    <property type="project" value="RGD"/>
</dbReference>
<dbReference type="GO" id="GO:0043588">
    <property type="term" value="P:skin development"/>
    <property type="evidence" value="ECO:0000266"/>
    <property type="project" value="RGD"/>
</dbReference>
<dbReference type="GO" id="GO:0008063">
    <property type="term" value="P:Toll signaling pathway"/>
    <property type="evidence" value="ECO:0000314"/>
    <property type="project" value="RGD"/>
</dbReference>
<dbReference type="GO" id="GO:0034142">
    <property type="term" value="P:toll-like receptor 4 signaling pathway"/>
    <property type="evidence" value="ECO:0000266"/>
    <property type="project" value="RGD"/>
</dbReference>
<dbReference type="GO" id="GO:0034146">
    <property type="term" value="P:toll-like receptor 5 signaling pathway"/>
    <property type="evidence" value="ECO:0000266"/>
    <property type="project" value="RGD"/>
</dbReference>
<dbReference type="GO" id="GO:0034158">
    <property type="term" value="P:toll-like receptor 8 signaling pathway"/>
    <property type="evidence" value="ECO:0000250"/>
    <property type="project" value="UniProtKB"/>
</dbReference>
<dbReference type="GO" id="GO:0038124">
    <property type="term" value="P:toll-like receptor TLR6:TLR2 signaling pathway"/>
    <property type="evidence" value="ECO:0000266"/>
    <property type="project" value="RGD"/>
</dbReference>
<dbReference type="GO" id="GO:0060337">
    <property type="term" value="P:type I interferon-mediated signaling pathway"/>
    <property type="evidence" value="ECO:0000266"/>
    <property type="project" value="RGD"/>
</dbReference>
<dbReference type="CDD" id="cd08312">
    <property type="entry name" value="Death_MyD88"/>
    <property type="match status" value="1"/>
</dbReference>
<dbReference type="FunFam" id="1.10.533.10:FF:000029">
    <property type="entry name" value="Myeloid differentiation primary response protein MyD88"/>
    <property type="match status" value="1"/>
</dbReference>
<dbReference type="FunFam" id="3.40.50.10140:FF:000005">
    <property type="entry name" value="Myeloid differentiation primary response protein MyD88"/>
    <property type="match status" value="1"/>
</dbReference>
<dbReference type="Gene3D" id="1.10.533.10">
    <property type="entry name" value="Death Domain, Fas"/>
    <property type="match status" value="1"/>
</dbReference>
<dbReference type="Gene3D" id="3.40.50.10140">
    <property type="entry name" value="Toll/interleukin-1 receptor homology (TIR) domain"/>
    <property type="match status" value="1"/>
</dbReference>
<dbReference type="InterPro" id="IPR011029">
    <property type="entry name" value="DEATH-like_dom_sf"/>
</dbReference>
<dbReference type="InterPro" id="IPR000488">
    <property type="entry name" value="Death_dom"/>
</dbReference>
<dbReference type="InterPro" id="IPR034249">
    <property type="entry name" value="MyD88_Death"/>
</dbReference>
<dbReference type="InterPro" id="IPR017281">
    <property type="entry name" value="Myelin_different_resp_MyD88"/>
</dbReference>
<dbReference type="InterPro" id="IPR000157">
    <property type="entry name" value="TIR_dom"/>
</dbReference>
<dbReference type="InterPro" id="IPR035897">
    <property type="entry name" value="Toll_tir_struct_dom_sf"/>
</dbReference>
<dbReference type="PANTHER" id="PTHR15079">
    <property type="entry name" value="MYD88"/>
    <property type="match status" value="1"/>
</dbReference>
<dbReference type="PANTHER" id="PTHR15079:SF3">
    <property type="entry name" value="MYELOID DIFFERENTIATION PRIMARY RESPONSE PROTEIN MYD88"/>
    <property type="match status" value="1"/>
</dbReference>
<dbReference type="Pfam" id="PF00531">
    <property type="entry name" value="Death"/>
    <property type="match status" value="1"/>
</dbReference>
<dbReference type="Pfam" id="PF13676">
    <property type="entry name" value="TIR_2"/>
    <property type="match status" value="1"/>
</dbReference>
<dbReference type="PIRSF" id="PIRSF037756">
    <property type="entry name" value="MyD88"/>
    <property type="match status" value="1"/>
</dbReference>
<dbReference type="SMART" id="SM00005">
    <property type="entry name" value="DEATH"/>
    <property type="match status" value="1"/>
</dbReference>
<dbReference type="SMART" id="SM00255">
    <property type="entry name" value="TIR"/>
    <property type="match status" value="1"/>
</dbReference>
<dbReference type="SUPFAM" id="SSF47986">
    <property type="entry name" value="DEATH domain"/>
    <property type="match status" value="1"/>
</dbReference>
<dbReference type="SUPFAM" id="SSF52200">
    <property type="entry name" value="Toll/Interleukin receptor TIR domain"/>
    <property type="match status" value="1"/>
</dbReference>
<dbReference type="PROSITE" id="PS50017">
    <property type="entry name" value="DEATH_DOMAIN"/>
    <property type="match status" value="1"/>
</dbReference>
<dbReference type="PROSITE" id="PS50104">
    <property type="entry name" value="TIR"/>
    <property type="match status" value="1"/>
</dbReference>
<gene>
    <name type="primary">Myd88</name>
</gene>
<comment type="function">
    <text evidence="2 3">Adapter protein involved in the Toll-like receptor and IL-1 receptor signaling pathway in the innate immune response. Acts via IRAK1, IRAK2, IRF7 and TRAF6, leading to NF-kappa-B activation, cytokine secretion and the inflammatory response. Increases IL-8 transcription. Involved in IL-18-mediated signaling pathway. Activates IRF1 resulting in its rapid migration into the nucleus to mediate an efficient induction of IFN-beta, NOS2/INOS, and IL12A genes. Upon TLR8 activation by GU-rich single-stranded RNA (GU-rich RNA) derived from viruses, induces IL1B release through NLRP3 inflammasome activation (By similarity). MyD88-mediated signaling in intestinal epithelial cells is crucial for maintenance of gut homeostasis and controls the expression of the antimicrobial lectin REG3G in the small intestine (By similarity).</text>
</comment>
<comment type="subunit">
    <text evidence="3">Homodimer. Also forms heterodimers with TIRAP. Binds to TLR2, TLR4, IRAK1, IRAK2 and IRAK4 via their respective TIR domains. Interacts with IL18R1. Interacts with BMX, IL1RL1, IKBKE and IRF7. Interacts with LRRFIP1 and LRRFIP2; this interaction positively regulates Toll-like receptor (TLR) signaling in response to agonist. Interacts with FLII. LRRFIP1 and LRRFIP2 compete with FLII for MYD88-binding. Interacts with IRF1. Upon IL1B treatment, forms a complex with PELI1, IRAK1, IRAK4 and TRAF6; this complex recruits MAP3K7/TAK1, TAB1 and TAB2 to mediate NF-kappa-B activation. Direct binding of SMAD6 to PELI1 prevents the complex formation and hence negatively regulates IL1R-TLR signaling and eventually NF-kappa-B-mediated gene expression. May interact with PIK3AP1. Interacts (via TIR domain) with DHX9 (via H2A and OB-fold regions); this interaction is direct. Interacts with OTUD4 deubiquitinase; the interaction is direct.</text>
</comment>
<comment type="subcellular location">
    <subcellularLocation>
        <location evidence="3">Cytoplasm</location>
    </subcellularLocation>
    <subcellularLocation>
        <location evidence="3">Nucleus</location>
    </subcellularLocation>
</comment>
<comment type="domain">
    <text evidence="2">The intermediate domain (ID) is required for the phosphorylation and activation of IRAK.</text>
</comment>
<comment type="PTM">
    <text evidence="3">Ubiquitinated; undergoes 'Lys-63'-linked polyubiquitination. OTUD4 specifically hydrolyzes 'Lys-63'-linked polyubiquitinated MYD88. Deubiquitinated by USP3 that cleaves 'Lys-63'-linked ubiquitin chains leading to inhibition of MYD88-induced NF-kappa-B signaling.</text>
</comment>
<sequence length="296" mass="33856">MSAGGPRVGSVSVDSYLFSLPLVALNVGVRRRLSLFLNPRTTAAADWTSLAEEMGFEYLEIREFETRPDPTRSLLDAWQGRSGSSVGRLLELLALLDREDILYELKDRIEEDCQKYIRNQQKQESEKPLQVARVESSVPQTKELGGITTLDDPLGQTPELFDAFICYCPSDIEFVQEMIRQLEQTDYRLKLCVSDRDVLPGTCVWSIASELIEKRCRRMVVVVSDDYLQSKECDFQTKFALSLSPGVQQKRLIPIKYKAMKKDFPSILRFITICDYTNPCTKSWFWTRLAKALSLP</sequence>
<proteinExistence type="evidence at transcript level"/>
<organism>
    <name type="scientific">Rattus norvegicus</name>
    <name type="common">Rat</name>
    <dbReference type="NCBI Taxonomy" id="10116"/>
    <lineage>
        <taxon>Eukaryota</taxon>
        <taxon>Metazoa</taxon>
        <taxon>Chordata</taxon>
        <taxon>Craniata</taxon>
        <taxon>Vertebrata</taxon>
        <taxon>Euteleostomi</taxon>
        <taxon>Mammalia</taxon>
        <taxon>Eutheria</taxon>
        <taxon>Euarchontoglires</taxon>
        <taxon>Glires</taxon>
        <taxon>Rodentia</taxon>
        <taxon>Myomorpha</taxon>
        <taxon>Muroidea</taxon>
        <taxon>Muridae</taxon>
        <taxon>Murinae</taxon>
        <taxon>Rattus</taxon>
    </lineage>
</organism>
<evidence type="ECO:0000250" key="1"/>
<evidence type="ECO:0000250" key="2">
    <source>
        <dbReference type="UniProtKB" id="P22366"/>
    </source>
</evidence>
<evidence type="ECO:0000250" key="3">
    <source>
        <dbReference type="UniProtKB" id="Q99836"/>
    </source>
</evidence>
<evidence type="ECO:0000255" key="4">
    <source>
        <dbReference type="PROSITE-ProRule" id="PRU00064"/>
    </source>
</evidence>
<evidence type="ECO:0000255" key="5">
    <source>
        <dbReference type="PROSITE-ProRule" id="PRU00204"/>
    </source>
</evidence>
<evidence type="ECO:0000305" key="6"/>
<keyword id="KW-0963">Cytoplasm</keyword>
<keyword id="KW-0391">Immunity</keyword>
<keyword id="KW-0395">Inflammatory response</keyword>
<keyword id="KW-0399">Innate immunity</keyword>
<keyword id="KW-0539">Nucleus</keyword>
<keyword id="KW-0597">Phosphoprotein</keyword>
<keyword id="KW-1185">Reference proteome</keyword>
<keyword id="KW-0832">Ubl conjugation</keyword>
<feature type="chain" id="PRO_0000393138" description="Myeloid differentiation primary response protein MyD88">
    <location>
        <begin position="1"/>
        <end position="296"/>
    </location>
</feature>
<feature type="domain" description="Death" evidence="4">
    <location>
        <begin position="32"/>
        <end position="109"/>
    </location>
</feature>
<feature type="domain" description="TIR" evidence="5">
    <location>
        <begin position="159"/>
        <end position="293"/>
    </location>
</feature>
<feature type="region of interest" description="Intermediate domain" evidence="1">
    <location>
        <begin position="110"/>
        <end position="155"/>
    </location>
</feature>
<feature type="modified residue" description="Phosphoserine" evidence="3">
    <location>
        <position position="244"/>
    </location>
</feature>
<feature type="sequence conflict" description="In Ref. 1; AAO91937." evidence="6" ref="1">
    <original>S</original>
    <variation>N</variation>
    <location>
        <position position="170"/>
    </location>
</feature>
<reference key="1">
    <citation type="submission" date="2002-12" db="EMBL/GenBank/DDBJ databases">
        <title>Molecular cloning and regulation of MyD88 mRNA in rat spleen.</title>
        <authorList>
            <person name="Li Y."/>
            <person name="Ji A."/>
            <person name="Schafer M.K."/>
        </authorList>
    </citation>
    <scope>NUCLEOTIDE SEQUENCE [MRNA]</scope>
    <source>
        <strain>Wistar</strain>
        <tissue>Spleen</tissue>
    </source>
</reference>
<reference key="2">
    <citation type="journal article" date="2004" name="Genome Res.">
        <title>The status, quality, and expansion of the NIH full-length cDNA project: the Mammalian Gene Collection (MGC).</title>
        <authorList>
            <consortium name="The MGC Project Team"/>
        </authorList>
    </citation>
    <scope>NUCLEOTIDE SEQUENCE [LARGE SCALE MRNA]</scope>
    <source>
        <tissue>Placenta</tissue>
    </source>
</reference>
<protein>
    <recommendedName>
        <fullName>Myeloid differentiation primary response protein MyD88</fullName>
    </recommendedName>
</protein>
<name>MYD88_RAT</name>
<accession>Q6Y1S1</accession>
<accession>Q4QRC0</accession>